<reference key="1">
    <citation type="journal article" date="1990" name="Gene">
        <title>Cloning and characterization of the histidine biosynthetic gene cluster of Streptomyces coelicolor A3(2).</title>
        <authorList>
            <person name="Limauro D."/>
            <person name="Avitabile A."/>
            <person name="Cappellano M."/>
            <person name="Puglia A.M."/>
            <person name="Bruni C.B."/>
        </authorList>
    </citation>
    <scope>NUCLEOTIDE SEQUENCE [GENOMIC DNA]</scope>
    <source>
        <strain>A3(2) / NRRL B-16638</strain>
    </source>
</reference>
<reference key="2">
    <citation type="journal article" date="2002" name="Nature">
        <title>Complete genome sequence of the model actinomycete Streptomyces coelicolor A3(2).</title>
        <authorList>
            <person name="Bentley S.D."/>
            <person name="Chater K.F."/>
            <person name="Cerdeno-Tarraga A.-M."/>
            <person name="Challis G.L."/>
            <person name="Thomson N.R."/>
            <person name="James K.D."/>
            <person name="Harris D.E."/>
            <person name="Quail M.A."/>
            <person name="Kieser H."/>
            <person name="Harper D."/>
            <person name="Bateman A."/>
            <person name="Brown S."/>
            <person name="Chandra G."/>
            <person name="Chen C.W."/>
            <person name="Collins M."/>
            <person name="Cronin A."/>
            <person name="Fraser A."/>
            <person name="Goble A."/>
            <person name="Hidalgo J."/>
            <person name="Hornsby T."/>
            <person name="Howarth S."/>
            <person name="Huang C.-H."/>
            <person name="Kieser T."/>
            <person name="Larke L."/>
            <person name="Murphy L.D."/>
            <person name="Oliver K."/>
            <person name="O'Neil S."/>
            <person name="Rabbinowitsch E."/>
            <person name="Rajandream M.A."/>
            <person name="Rutherford K.M."/>
            <person name="Rutter S."/>
            <person name="Seeger K."/>
            <person name="Saunders D."/>
            <person name="Sharp S."/>
            <person name="Squares R."/>
            <person name="Squares S."/>
            <person name="Taylor K."/>
            <person name="Warren T."/>
            <person name="Wietzorrek A."/>
            <person name="Woodward J.R."/>
            <person name="Barrell B.G."/>
            <person name="Parkhill J."/>
            <person name="Hopwood D.A."/>
        </authorList>
    </citation>
    <scope>NUCLEOTIDE SEQUENCE [LARGE SCALE GENOMIC DNA]</scope>
    <source>
        <strain>ATCC BAA-471 / A3(2) / M145</strain>
    </source>
</reference>
<reference key="3">
    <citation type="journal article" date="2003" name="EMBO Rep.">
        <title>Occurrence of a putative ancient-like isomerase involved in histidine and tryptophan biosynthesis.</title>
        <authorList>
            <person name="Barona-Gomez F."/>
            <person name="Hodgson D.A."/>
        </authorList>
    </citation>
    <scope>INVOLVEMENT IN HISTIDINE AND TRYPTOPHAN BIOSYNTHESIS</scope>
    <source>
        <strain>ATCC BAA-471 / A3(2) / M145</strain>
    </source>
</reference>
<reference key="4">
    <citation type="journal article" date="2005" name="EMBO Rep.">
        <title>Two-fold repeated (beta alpha)4 half-barrels may provide a molecular tool for dual substrate specificity.</title>
        <authorList>
            <person name="Kuper J."/>
            <person name="Doenges C."/>
            <person name="Wilmanns M."/>
        </authorList>
    </citation>
    <scope>X-RAY CRYSTALLOGRAPHY (1.8 ANGSTROMS)</scope>
    <scope>CATALYTIC ACTIVITY</scope>
    <scope>BIOPHYSICOCHEMICAL PROPERTIES</scope>
    <scope>SUBUNIT</scope>
</reference>
<reference key="5">
    <citation type="journal article" date="2008" name="Biochem. Biophys. Res. Commun.">
        <title>The structure/function relationship of a dual-substrate (beta alpha)8-isomerase.</title>
        <authorList>
            <person name="Wright H."/>
            <person name="Noda-Garcia L."/>
            <person name="Ochoa-Leyva A."/>
            <person name="Hodgson D.A."/>
            <person name="Fueloep V."/>
            <person name="Barona-Gomez F."/>
        </authorList>
    </citation>
    <scope>X-RAY CRYSTALLOGRAPHY (1.8 ANGSTROMS)</scope>
    <scope>MUTAGENESIS OF ASP-11; ARG-19; SER-81; ASP-130; THR-166 AND ASP-171</scope>
</reference>
<organism>
    <name type="scientific">Streptomyces coelicolor (strain ATCC BAA-471 / A3(2) / M145)</name>
    <dbReference type="NCBI Taxonomy" id="100226"/>
    <lineage>
        <taxon>Bacteria</taxon>
        <taxon>Bacillati</taxon>
        <taxon>Actinomycetota</taxon>
        <taxon>Actinomycetes</taxon>
        <taxon>Kitasatosporales</taxon>
        <taxon>Streptomycetaceae</taxon>
        <taxon>Streptomyces</taxon>
        <taxon>Streptomyces albidoflavus group</taxon>
    </lineage>
</organism>
<comment type="function">
    <text>Catalyzes the isomerization of the aminoaldose moiety of ProFAR to the aminoketose of PRFAR in the biosynthesis pathway for histidine and the isomerization of the aminoaldose PRA to the aminoketose CdRP in the biosynthsis pathway for tryptophan.</text>
</comment>
<comment type="catalytic activity">
    <reaction evidence="2">
        <text>1-(5-phospho-beta-D-ribosyl)-5-[(5-phospho-beta-D-ribosylamino)methylideneamino]imidazole-4-carboxamide = 5-[(5-phospho-1-deoxy-D-ribulos-1-ylimino)methylamino]-1-(5-phospho-beta-D-ribosyl)imidazole-4-carboxamide</text>
        <dbReference type="Rhea" id="RHEA:15469"/>
        <dbReference type="ChEBI" id="CHEBI:58435"/>
        <dbReference type="ChEBI" id="CHEBI:58525"/>
        <dbReference type="EC" id="5.3.1.16"/>
    </reaction>
</comment>
<comment type="catalytic activity">
    <reaction evidence="2">
        <text>N-(5-phospho-beta-D-ribosyl)anthranilate = 1-(2-carboxyphenylamino)-1-deoxy-D-ribulose 5-phosphate</text>
        <dbReference type="Rhea" id="RHEA:21540"/>
        <dbReference type="ChEBI" id="CHEBI:18277"/>
        <dbReference type="ChEBI" id="CHEBI:58613"/>
        <dbReference type="EC" id="5.3.1.24"/>
    </reaction>
</comment>
<comment type="biophysicochemical properties">
    <kinetics>
        <KM evidence="2">28 uM for ProFAR</KM>
        <KM evidence="2">4 uM for PRA</KM>
    </kinetics>
</comment>
<comment type="pathway">
    <text>Amino-acid biosynthesis; L-histidine biosynthesis; L-histidine from 5-phospho-alpha-D-ribose 1-diphosphate: step 4/9.</text>
</comment>
<comment type="pathway">
    <text>Amino-acid biosynthesis; L-tryptophan biosynthesis; L-tryptophan from chorismate: step 3/5.</text>
</comment>
<comment type="subunit">
    <text evidence="2">Monomer.</text>
</comment>
<comment type="subcellular location">
    <subcellularLocation>
        <location evidence="1">Cytoplasm</location>
    </subcellularLocation>
</comment>
<comment type="similarity">
    <text evidence="4">Belongs to the HisA/HisF family.</text>
</comment>
<keyword id="KW-0002">3D-structure</keyword>
<keyword id="KW-0028">Amino-acid biosynthesis</keyword>
<keyword id="KW-0057">Aromatic amino acid biosynthesis</keyword>
<keyword id="KW-0963">Cytoplasm</keyword>
<keyword id="KW-0368">Histidine biosynthesis</keyword>
<keyword id="KW-0413">Isomerase</keyword>
<keyword id="KW-1185">Reference proteome</keyword>
<keyword id="KW-0822">Tryptophan biosynthesis</keyword>
<name>HIS4_STRCO</name>
<accession>P16250</accession>
<feature type="chain" id="PRO_0000142087" description="Phosphoribosyl isomerase A">
    <location>
        <begin position="1"/>
        <end position="240"/>
    </location>
</feature>
<feature type="active site" description="Proton acceptor" evidence="1">
    <location>
        <position position="11"/>
    </location>
</feature>
<feature type="active site" description="Proton donor" evidence="1">
    <location>
        <position position="130"/>
    </location>
</feature>
<feature type="mutagenesis site" description="No activity." evidence="3">
    <original>D</original>
    <variation>A</variation>
    <location>
        <position position="11"/>
    </location>
</feature>
<feature type="mutagenesis site" description="No effect on activity toward PRA. No activity toward ProFAR." evidence="3">
    <original>R</original>
    <variation>A</variation>
    <location>
        <position position="19"/>
    </location>
</feature>
<feature type="mutagenesis site" description="No activity toward PRA. Almost no effect on activity toward ProFAR." evidence="3">
    <original>S</original>
    <variation>T</variation>
    <location>
        <position position="81"/>
    </location>
</feature>
<feature type="mutagenesis site" description="Very low activity toward PRA. No activity toward ProFAR." evidence="3">
    <original>D</original>
    <variation>A</variation>
    <location>
        <position position="130"/>
    </location>
</feature>
<feature type="mutagenesis site" description="No activity." evidence="3">
    <original>D</original>
    <variation>Q</variation>
    <location>
        <position position="130"/>
    </location>
</feature>
<feature type="mutagenesis site" description="No activity." evidence="3">
    <original>T</original>
    <variation>A</variation>
    <location>
        <position position="166"/>
    </location>
</feature>
<feature type="mutagenesis site" description="Low activity toward PRA. No activity toward ProFAR." evidence="3">
    <original>D</original>
    <variation>A</variation>
    <location>
        <position position="171"/>
    </location>
</feature>
<feature type="strand" evidence="5">
    <location>
        <begin position="5"/>
        <end position="13"/>
    </location>
</feature>
<feature type="strand" evidence="5">
    <location>
        <begin position="16"/>
        <end position="18"/>
    </location>
</feature>
<feature type="strand" evidence="7">
    <location>
        <begin position="28"/>
        <end position="30"/>
    </location>
</feature>
<feature type="helix" evidence="5">
    <location>
        <begin position="34"/>
        <end position="43"/>
    </location>
</feature>
<feature type="strand" evidence="5">
    <location>
        <begin position="47"/>
        <end position="53"/>
    </location>
</feature>
<feature type="helix" evidence="5">
    <location>
        <begin position="54"/>
        <end position="58"/>
    </location>
</feature>
<feature type="helix" evidence="5">
    <location>
        <begin position="64"/>
        <end position="73"/>
    </location>
</feature>
<feature type="strand" evidence="5">
    <location>
        <begin position="75"/>
        <end position="83"/>
    </location>
</feature>
<feature type="helix" evidence="5">
    <location>
        <begin position="87"/>
        <end position="95"/>
    </location>
</feature>
<feature type="strand" evidence="5">
    <location>
        <begin position="99"/>
        <end position="103"/>
    </location>
</feature>
<feature type="helix" evidence="5">
    <location>
        <begin position="105"/>
        <end position="109"/>
    </location>
</feature>
<feature type="helix" evidence="5">
    <location>
        <begin position="111"/>
        <end position="121"/>
    </location>
</feature>
<feature type="helix" evidence="5">
    <location>
        <begin position="122"/>
        <end position="124"/>
    </location>
</feature>
<feature type="strand" evidence="5">
    <location>
        <begin position="125"/>
        <end position="132"/>
    </location>
</feature>
<feature type="strand" evidence="8">
    <location>
        <begin position="135"/>
        <end position="138"/>
    </location>
</feature>
<feature type="strand" evidence="5">
    <location>
        <begin position="139"/>
        <end position="141"/>
    </location>
</feature>
<feature type="strand" evidence="8">
    <location>
        <begin position="143"/>
        <end position="147"/>
    </location>
</feature>
<feature type="helix" evidence="5">
    <location>
        <begin position="148"/>
        <end position="157"/>
    </location>
</feature>
<feature type="strand" evidence="5">
    <location>
        <begin position="163"/>
        <end position="167"/>
    </location>
</feature>
<feature type="helix" evidence="6">
    <location>
        <begin position="168"/>
        <end position="170"/>
    </location>
</feature>
<feature type="turn" evidence="6">
    <location>
        <begin position="171"/>
        <end position="173"/>
    </location>
</feature>
<feature type="helix" evidence="5">
    <location>
        <begin position="179"/>
        <end position="187"/>
    </location>
</feature>
<feature type="strand" evidence="5">
    <location>
        <begin position="193"/>
        <end position="197"/>
    </location>
</feature>
<feature type="helix" evidence="5">
    <location>
        <begin position="202"/>
        <end position="209"/>
    </location>
</feature>
<feature type="turn" evidence="5">
    <location>
        <begin position="210"/>
        <end position="215"/>
    </location>
</feature>
<feature type="strand" evidence="5">
    <location>
        <begin position="216"/>
        <end position="221"/>
    </location>
</feature>
<feature type="helix" evidence="5">
    <location>
        <begin position="223"/>
        <end position="226"/>
    </location>
</feature>
<feature type="helix" evidence="5">
    <location>
        <begin position="232"/>
        <end position="239"/>
    </location>
</feature>
<protein>
    <recommendedName>
        <fullName>Phosphoribosyl isomerase A</fullName>
    </recommendedName>
    <alternativeName>
        <fullName>1-(5-phosphoribosyl)-5-[(5-phosphoribosylamino)methylideneamino] imidazole-4-carboxamide isomerase</fullName>
        <ecNumber>5.3.1.16</ecNumber>
    </alternativeName>
    <alternativeName>
        <fullName>N-(5'-phosphoribosyl)anthranilate isomerase</fullName>
        <shortName>PRAI</shortName>
        <ecNumber>5.3.1.24</ecNumber>
    </alternativeName>
    <alternativeName>
        <fullName>Phosphoribosylformimino-5-aminoimidazole carboxamide ribotide isomerase</fullName>
    </alternativeName>
</protein>
<gene>
    <name type="primary">priA</name>
    <name type="synonym">hisA</name>
    <name type="ordered locus">SCO2050</name>
    <name type="ORF">SC4G6.19c</name>
</gene>
<proteinExistence type="evidence at protein level"/>
<evidence type="ECO:0000250" key="1"/>
<evidence type="ECO:0000269" key="2">
    <source>
    </source>
</evidence>
<evidence type="ECO:0000269" key="3">
    <source>
    </source>
</evidence>
<evidence type="ECO:0000305" key="4"/>
<evidence type="ECO:0007829" key="5">
    <source>
        <dbReference type="PDB" id="1VZW"/>
    </source>
</evidence>
<evidence type="ECO:0007829" key="6">
    <source>
        <dbReference type="PDB" id="2VEP"/>
    </source>
</evidence>
<evidence type="ECO:0007829" key="7">
    <source>
        <dbReference type="PDB" id="2X30"/>
    </source>
</evidence>
<evidence type="ECO:0007829" key="8">
    <source>
        <dbReference type="PDB" id="5DN1"/>
    </source>
</evidence>
<dbReference type="EC" id="5.3.1.16"/>
<dbReference type="EC" id="5.3.1.24"/>
<dbReference type="EMBL" id="M31628">
    <property type="protein sequence ID" value="AAA26760.1"/>
    <property type="molecule type" value="Genomic_DNA"/>
</dbReference>
<dbReference type="EMBL" id="AL939111">
    <property type="protein sequence ID" value="CAB51442.1"/>
    <property type="molecule type" value="Genomic_DNA"/>
</dbReference>
<dbReference type="PIR" id="JQ0641">
    <property type="entry name" value="JQ0641"/>
</dbReference>
<dbReference type="RefSeq" id="NP_626310.1">
    <property type="nucleotide sequence ID" value="NC_003888.3"/>
</dbReference>
<dbReference type="RefSeq" id="WP_003976766.1">
    <property type="nucleotide sequence ID" value="NZ_VNID01000001.1"/>
</dbReference>
<dbReference type="PDB" id="1VZW">
    <property type="method" value="X-ray"/>
    <property type="resolution" value="1.80 A"/>
    <property type="chains" value="A=1-240"/>
</dbReference>
<dbReference type="PDB" id="2VEP">
    <property type="method" value="X-ray"/>
    <property type="resolution" value="1.80 A"/>
    <property type="chains" value="A=1-240"/>
</dbReference>
<dbReference type="PDB" id="2X30">
    <property type="method" value="X-ray"/>
    <property type="resolution" value="1.95 A"/>
    <property type="chains" value="A=1-240"/>
</dbReference>
<dbReference type="PDB" id="5DN1">
    <property type="method" value="X-ray"/>
    <property type="resolution" value="1.95 A"/>
    <property type="chains" value="A=1-240"/>
</dbReference>
<dbReference type="PDBsum" id="1VZW"/>
<dbReference type="PDBsum" id="2VEP"/>
<dbReference type="PDBsum" id="2X30"/>
<dbReference type="PDBsum" id="5DN1"/>
<dbReference type="SMR" id="P16250"/>
<dbReference type="FunCoup" id="P16250">
    <property type="interactions" value="122"/>
</dbReference>
<dbReference type="STRING" id="100226.gene:17759648"/>
<dbReference type="PaxDb" id="100226-SCO2050"/>
<dbReference type="GeneID" id="91386957"/>
<dbReference type="KEGG" id="sco:SCO2050"/>
<dbReference type="PATRIC" id="fig|100226.15.peg.2081"/>
<dbReference type="eggNOG" id="COG0106">
    <property type="taxonomic scope" value="Bacteria"/>
</dbReference>
<dbReference type="HOGENOM" id="CLU_048577_1_1_11"/>
<dbReference type="InParanoid" id="P16250"/>
<dbReference type="OrthoDB" id="9807749at2"/>
<dbReference type="PhylomeDB" id="P16250"/>
<dbReference type="BRENDA" id="5.3.1.24">
    <property type="organism ID" value="5998"/>
</dbReference>
<dbReference type="SABIO-RK" id="P16250"/>
<dbReference type="UniPathway" id="UPA00031">
    <property type="reaction ID" value="UER00009"/>
</dbReference>
<dbReference type="UniPathway" id="UPA00035">
    <property type="reaction ID" value="UER00042"/>
</dbReference>
<dbReference type="EvolutionaryTrace" id="P16250"/>
<dbReference type="Proteomes" id="UP000001973">
    <property type="component" value="Chromosome"/>
</dbReference>
<dbReference type="GO" id="GO:0005737">
    <property type="term" value="C:cytoplasm"/>
    <property type="evidence" value="ECO:0000318"/>
    <property type="project" value="GO_Central"/>
</dbReference>
<dbReference type="GO" id="GO:0003949">
    <property type="term" value="F:1-(5-phosphoribosyl)-5-[(5-phosphoribosylamino)methylideneamino]imidazole-4-carboxamide isomerase activity"/>
    <property type="evidence" value="ECO:0000318"/>
    <property type="project" value="GO_Central"/>
</dbReference>
<dbReference type="GO" id="GO:0004640">
    <property type="term" value="F:phosphoribosylanthranilate isomerase activity"/>
    <property type="evidence" value="ECO:0007669"/>
    <property type="project" value="UniProtKB-UniRule"/>
</dbReference>
<dbReference type="GO" id="GO:0000105">
    <property type="term" value="P:L-histidine biosynthetic process"/>
    <property type="evidence" value="ECO:0000318"/>
    <property type="project" value="GO_Central"/>
</dbReference>
<dbReference type="GO" id="GO:0000162">
    <property type="term" value="P:L-tryptophan biosynthetic process"/>
    <property type="evidence" value="ECO:0007669"/>
    <property type="project" value="UniProtKB-UniRule"/>
</dbReference>
<dbReference type="CDD" id="cd04732">
    <property type="entry name" value="HisA"/>
    <property type="match status" value="1"/>
</dbReference>
<dbReference type="FunFam" id="3.20.20.70:FF:000009">
    <property type="entry name" value="1-(5-phosphoribosyl)-5-[(5-phosphoribosylamino)methylideneamino] imidazole-4-carboxamide isomerase"/>
    <property type="match status" value="1"/>
</dbReference>
<dbReference type="Gene3D" id="3.20.20.70">
    <property type="entry name" value="Aldolase class I"/>
    <property type="match status" value="1"/>
</dbReference>
<dbReference type="HAMAP" id="MF_01014">
    <property type="entry name" value="HisA"/>
    <property type="match status" value="1"/>
</dbReference>
<dbReference type="InterPro" id="IPR013785">
    <property type="entry name" value="Aldolase_TIM"/>
</dbReference>
<dbReference type="InterPro" id="IPR006062">
    <property type="entry name" value="His_biosynth"/>
</dbReference>
<dbReference type="InterPro" id="IPR010188">
    <property type="entry name" value="HisA/PriA_Actinobacteria"/>
</dbReference>
<dbReference type="InterPro" id="IPR044524">
    <property type="entry name" value="Isoase_HisA-like"/>
</dbReference>
<dbReference type="InterPro" id="IPR023016">
    <property type="entry name" value="Isoase_HisA-like_bact"/>
</dbReference>
<dbReference type="InterPro" id="IPR011060">
    <property type="entry name" value="RibuloseP-bd_barrel"/>
</dbReference>
<dbReference type="NCBIfam" id="TIGR01919">
    <property type="entry name" value="hisA-trpF"/>
    <property type="match status" value="1"/>
</dbReference>
<dbReference type="PANTHER" id="PTHR43090">
    <property type="entry name" value="1-(5-PHOSPHORIBOSYL)-5-[(5-PHOSPHORIBOSYLAMINO)METHYLIDENEAMINO] IMIDAZOLE-4-CARBOXAMIDE ISOMERASE"/>
    <property type="match status" value="1"/>
</dbReference>
<dbReference type="PANTHER" id="PTHR43090:SF2">
    <property type="entry name" value="1-(5-PHOSPHORIBOSYL)-5-[(5-PHOSPHORIBOSYLAMINO)METHYLIDENEAMINO] IMIDAZOLE-4-CARBOXAMIDE ISOMERASE"/>
    <property type="match status" value="1"/>
</dbReference>
<dbReference type="Pfam" id="PF00977">
    <property type="entry name" value="His_biosynth"/>
    <property type="match status" value="1"/>
</dbReference>
<dbReference type="SUPFAM" id="SSF51366">
    <property type="entry name" value="Ribulose-phoshate binding barrel"/>
    <property type="match status" value="1"/>
</dbReference>
<sequence length="240" mass="25080">MSKLELLPAVDVRDGQAVRLVHGESGTETSYGSPLEAALAWQRSGAEWLHLVDLDAAFGTGDNRALIAEVAQAMDIKVELSGGIRDDDTLAAALATGCTRVNLGTAALETPEWVAKVIAEHGDKIAVGLDVRGTTLRGRGWTRDGGDLYETLDRLNKEGCARYVVTDIAKDGTLQGPNLELLKNVCAATDRPVVASGGVSSLDDLRAIAGLVPAGVEGAIVGKALYAKAFTLEEALEATS</sequence>